<keyword id="KW-0344">Guanine-nucleotide releasing factor</keyword>
<keyword id="KW-0479">Metal-binding</keyword>
<keyword id="KW-0653">Protein transport</keyword>
<keyword id="KW-1185">Reference proteome</keyword>
<keyword id="KW-0813">Transport</keyword>
<keyword id="KW-0862">Zinc</keyword>
<gene>
    <name evidence="3" type="primary">dss4</name>
    <name type="ORF">SPBC4C3.04c</name>
</gene>
<comment type="function">
    <text evidence="1">Guanine-nucleotide-releasing protein that acts on members of the sec4/ypt1/rab subfamily.</text>
</comment>
<comment type="similarity">
    <text evidence="2">Belongs to the DSS4/MSS4 family.</text>
</comment>
<feature type="chain" id="PRO_0000174179" description="Guanine nucleotide exchange factor MSS4 homolog">
    <location>
        <begin position="1"/>
        <end position="100"/>
    </location>
</feature>
<feature type="domain" description="MSS4" evidence="2">
    <location>
        <begin position="1"/>
        <end position="100"/>
    </location>
</feature>
<feature type="binding site" evidence="2">
    <location>
        <position position="8"/>
    </location>
    <ligand>
        <name>Zn(2+)</name>
        <dbReference type="ChEBI" id="CHEBI:29105"/>
    </ligand>
</feature>
<feature type="binding site" evidence="2">
    <location>
        <position position="11"/>
    </location>
    <ligand>
        <name>Zn(2+)</name>
        <dbReference type="ChEBI" id="CHEBI:29105"/>
    </ligand>
</feature>
<feature type="binding site" evidence="2">
    <location>
        <position position="73"/>
    </location>
    <ligand>
        <name>Zn(2+)</name>
        <dbReference type="ChEBI" id="CHEBI:29105"/>
    </ligand>
</feature>
<feature type="binding site" evidence="2">
    <location>
        <position position="76"/>
    </location>
    <ligand>
        <name>Zn(2+)</name>
        <dbReference type="ChEBI" id="CHEBI:29105"/>
    </ligand>
</feature>
<reference key="1">
    <citation type="journal article" date="2002" name="Nature">
        <title>The genome sequence of Schizosaccharomyces pombe.</title>
        <authorList>
            <person name="Wood V."/>
            <person name="Gwilliam R."/>
            <person name="Rajandream M.A."/>
            <person name="Lyne M.H."/>
            <person name="Lyne R."/>
            <person name="Stewart A."/>
            <person name="Sgouros J.G."/>
            <person name="Peat N."/>
            <person name="Hayles J."/>
            <person name="Baker S.G."/>
            <person name="Basham D."/>
            <person name="Bowman S."/>
            <person name="Brooks K."/>
            <person name="Brown D."/>
            <person name="Brown S."/>
            <person name="Chillingworth T."/>
            <person name="Churcher C.M."/>
            <person name="Collins M."/>
            <person name="Connor R."/>
            <person name="Cronin A."/>
            <person name="Davis P."/>
            <person name="Feltwell T."/>
            <person name="Fraser A."/>
            <person name="Gentles S."/>
            <person name="Goble A."/>
            <person name="Hamlin N."/>
            <person name="Harris D.E."/>
            <person name="Hidalgo J."/>
            <person name="Hodgson G."/>
            <person name="Holroyd S."/>
            <person name="Hornsby T."/>
            <person name="Howarth S."/>
            <person name="Huckle E.J."/>
            <person name="Hunt S."/>
            <person name="Jagels K."/>
            <person name="James K.D."/>
            <person name="Jones L."/>
            <person name="Jones M."/>
            <person name="Leather S."/>
            <person name="McDonald S."/>
            <person name="McLean J."/>
            <person name="Mooney P."/>
            <person name="Moule S."/>
            <person name="Mungall K.L."/>
            <person name="Murphy L.D."/>
            <person name="Niblett D."/>
            <person name="Odell C."/>
            <person name="Oliver K."/>
            <person name="O'Neil S."/>
            <person name="Pearson D."/>
            <person name="Quail M.A."/>
            <person name="Rabbinowitsch E."/>
            <person name="Rutherford K.M."/>
            <person name="Rutter S."/>
            <person name="Saunders D."/>
            <person name="Seeger K."/>
            <person name="Sharp S."/>
            <person name="Skelton J."/>
            <person name="Simmonds M.N."/>
            <person name="Squares R."/>
            <person name="Squares S."/>
            <person name="Stevens K."/>
            <person name="Taylor K."/>
            <person name="Taylor R.G."/>
            <person name="Tivey A."/>
            <person name="Walsh S.V."/>
            <person name="Warren T."/>
            <person name="Whitehead S."/>
            <person name="Woodward J.R."/>
            <person name="Volckaert G."/>
            <person name="Aert R."/>
            <person name="Robben J."/>
            <person name="Grymonprez B."/>
            <person name="Weltjens I."/>
            <person name="Vanstreels E."/>
            <person name="Rieger M."/>
            <person name="Schaefer M."/>
            <person name="Mueller-Auer S."/>
            <person name="Gabel C."/>
            <person name="Fuchs M."/>
            <person name="Duesterhoeft A."/>
            <person name="Fritzc C."/>
            <person name="Holzer E."/>
            <person name="Moestl D."/>
            <person name="Hilbert H."/>
            <person name="Borzym K."/>
            <person name="Langer I."/>
            <person name="Beck A."/>
            <person name="Lehrach H."/>
            <person name="Reinhardt R."/>
            <person name="Pohl T.M."/>
            <person name="Eger P."/>
            <person name="Zimmermann W."/>
            <person name="Wedler H."/>
            <person name="Wambutt R."/>
            <person name="Purnelle B."/>
            <person name="Goffeau A."/>
            <person name="Cadieu E."/>
            <person name="Dreano S."/>
            <person name="Gloux S."/>
            <person name="Lelaure V."/>
            <person name="Mottier S."/>
            <person name="Galibert F."/>
            <person name="Aves S.J."/>
            <person name="Xiang Z."/>
            <person name="Hunt C."/>
            <person name="Moore K."/>
            <person name="Hurst S.M."/>
            <person name="Lucas M."/>
            <person name="Rochet M."/>
            <person name="Gaillardin C."/>
            <person name="Tallada V.A."/>
            <person name="Garzon A."/>
            <person name="Thode G."/>
            <person name="Daga R.R."/>
            <person name="Cruzado L."/>
            <person name="Jimenez J."/>
            <person name="Sanchez M."/>
            <person name="del Rey F."/>
            <person name="Benito J."/>
            <person name="Dominguez A."/>
            <person name="Revuelta J.L."/>
            <person name="Moreno S."/>
            <person name="Armstrong J."/>
            <person name="Forsburg S.L."/>
            <person name="Cerutti L."/>
            <person name="Lowe T."/>
            <person name="McCombie W.R."/>
            <person name="Paulsen I."/>
            <person name="Potashkin J."/>
            <person name="Shpakovski G.V."/>
            <person name="Ussery D."/>
            <person name="Barrell B.G."/>
            <person name="Nurse P."/>
        </authorList>
    </citation>
    <scope>NUCLEOTIDE SEQUENCE [LARGE SCALE GENOMIC DNA]</scope>
    <source>
        <strain>972 / ATCC 24843</strain>
    </source>
</reference>
<accession>O43057</accession>
<sequence>MSNLRIVCQHCPSVVFNNKRPDVVKRPTMSAMLHSETQEDLETDDFFLLKDPFAFDNVSVSKPLANNYKLLACADCEKGPLGYYDSKNNEYLLLCSLEKN</sequence>
<organism>
    <name type="scientific">Schizosaccharomyces pombe (strain 972 / ATCC 24843)</name>
    <name type="common">Fission yeast</name>
    <dbReference type="NCBI Taxonomy" id="284812"/>
    <lineage>
        <taxon>Eukaryota</taxon>
        <taxon>Fungi</taxon>
        <taxon>Dikarya</taxon>
        <taxon>Ascomycota</taxon>
        <taxon>Taphrinomycotina</taxon>
        <taxon>Schizosaccharomycetes</taxon>
        <taxon>Schizosaccharomycetales</taxon>
        <taxon>Schizosaccharomycetaceae</taxon>
        <taxon>Schizosaccharomyces</taxon>
    </lineage>
</organism>
<proteinExistence type="inferred from homology"/>
<dbReference type="EMBL" id="CU329671">
    <property type="protein sequence ID" value="CAA16825.1"/>
    <property type="molecule type" value="Genomic_DNA"/>
</dbReference>
<dbReference type="PIR" id="T40494">
    <property type="entry name" value="T40494"/>
</dbReference>
<dbReference type="RefSeq" id="NP_596302.1">
    <property type="nucleotide sequence ID" value="NM_001022223.2"/>
</dbReference>
<dbReference type="SMR" id="O43057"/>
<dbReference type="FunCoup" id="O43057">
    <property type="interactions" value="210"/>
</dbReference>
<dbReference type="STRING" id="284812.O43057"/>
<dbReference type="PaxDb" id="4896-SPBC4C3.04c.1"/>
<dbReference type="EnsemblFungi" id="SPBC4C3.04c.1">
    <property type="protein sequence ID" value="SPBC4C3.04c.1:pep"/>
    <property type="gene ID" value="SPBC4C3.04c"/>
</dbReference>
<dbReference type="GeneID" id="2540823"/>
<dbReference type="KEGG" id="spo:2540823"/>
<dbReference type="PomBase" id="SPBC4C3.04c"/>
<dbReference type="VEuPathDB" id="FungiDB:SPBC4C3.04c"/>
<dbReference type="eggNOG" id="KOG4113">
    <property type="taxonomic scope" value="Eukaryota"/>
</dbReference>
<dbReference type="HOGENOM" id="CLU_132754_0_0_1"/>
<dbReference type="InParanoid" id="O43057"/>
<dbReference type="OMA" id="KEYLLMC"/>
<dbReference type="PhylomeDB" id="O43057"/>
<dbReference type="PRO" id="PR:O43057"/>
<dbReference type="Proteomes" id="UP000002485">
    <property type="component" value="Chromosome II"/>
</dbReference>
<dbReference type="GO" id="GO:0005829">
    <property type="term" value="C:cytosol"/>
    <property type="evidence" value="ECO:0000318"/>
    <property type="project" value="GO_Central"/>
</dbReference>
<dbReference type="GO" id="GO:0016020">
    <property type="term" value="C:membrane"/>
    <property type="evidence" value="ECO:0000318"/>
    <property type="project" value="GO_Central"/>
</dbReference>
<dbReference type="GO" id="GO:0005085">
    <property type="term" value="F:guanyl-nucleotide exchange factor activity"/>
    <property type="evidence" value="ECO:0000318"/>
    <property type="project" value="GO_Central"/>
</dbReference>
<dbReference type="GO" id="GO:0008270">
    <property type="term" value="F:zinc ion binding"/>
    <property type="evidence" value="ECO:0000318"/>
    <property type="project" value="GO_Central"/>
</dbReference>
<dbReference type="GO" id="GO:0006892">
    <property type="term" value="P:post-Golgi vesicle-mediated transport"/>
    <property type="evidence" value="ECO:0000318"/>
    <property type="project" value="GO_Central"/>
</dbReference>
<dbReference type="GO" id="GO:0015031">
    <property type="term" value="P:protein transport"/>
    <property type="evidence" value="ECO:0007669"/>
    <property type="project" value="UniProtKB-KW"/>
</dbReference>
<dbReference type="GO" id="GO:0007264">
    <property type="term" value="P:small GTPase-mediated signal transduction"/>
    <property type="evidence" value="ECO:0007669"/>
    <property type="project" value="InterPro"/>
</dbReference>
<dbReference type="CDD" id="cd00246">
    <property type="entry name" value="RabGEF"/>
    <property type="match status" value="1"/>
</dbReference>
<dbReference type="FunFam" id="2.170.150.10:FF:000005">
    <property type="entry name" value="Guanine nucleotide exchange factor MSS4"/>
    <property type="match status" value="1"/>
</dbReference>
<dbReference type="Gene3D" id="2.170.150.10">
    <property type="entry name" value="Metal Binding Protein, Guanine Nucleotide Exchange Factor, Chain A"/>
    <property type="match status" value="1"/>
</dbReference>
<dbReference type="InterPro" id="IPR007515">
    <property type="entry name" value="Mss4"/>
</dbReference>
<dbReference type="InterPro" id="IPR011057">
    <property type="entry name" value="Mss4-like_sf"/>
</dbReference>
<dbReference type="InterPro" id="IPR011323">
    <property type="entry name" value="Mss4/transl-control_tumour"/>
</dbReference>
<dbReference type="PANTHER" id="PTHR13276">
    <property type="entry name" value="GUANINE NUCLEOTIDE EXCHANGE FACTOR MSS4"/>
    <property type="match status" value="1"/>
</dbReference>
<dbReference type="PANTHER" id="PTHR13276:SF0">
    <property type="entry name" value="GUANINE NUCLEOTIDE EXCHANGE FACTOR MSS4"/>
    <property type="match status" value="1"/>
</dbReference>
<dbReference type="Pfam" id="PF04421">
    <property type="entry name" value="Mss4"/>
    <property type="match status" value="1"/>
</dbReference>
<dbReference type="SUPFAM" id="SSF51316">
    <property type="entry name" value="Mss4-like"/>
    <property type="match status" value="1"/>
</dbReference>
<dbReference type="PROSITE" id="PS51796">
    <property type="entry name" value="MSS4"/>
    <property type="match status" value="1"/>
</dbReference>
<protein>
    <recommendedName>
        <fullName>Guanine nucleotide exchange factor MSS4 homolog</fullName>
    </recommendedName>
</protein>
<name>MSS4_SCHPO</name>
<evidence type="ECO:0000250" key="1"/>
<evidence type="ECO:0000255" key="2">
    <source>
        <dbReference type="PROSITE-ProRule" id="PRU01132"/>
    </source>
</evidence>
<evidence type="ECO:0000312" key="3">
    <source>
        <dbReference type="PomBase" id="SPBC4C3.04c"/>
    </source>
</evidence>